<protein>
    <recommendedName>
        <fullName evidence="21">Ceramide very long chain fatty acid hydroxylase SCS7</fullName>
        <shortName evidence="21">Ceramide VLCFA hydroxylase SCS7</shortName>
    </recommendedName>
    <alternativeName>
        <fullName evidence="19 21">4-hydroxysphinganine ceramide fatty acyl 2-hydroxylase SCS7</fullName>
        <ecNumber evidence="19 21">1.14.18.6</ecNumber>
    </alternativeName>
    <alternativeName>
        <fullName evidence="21">Dihydroceramide fatty acyl 2-hydroxylase SCS7</fullName>
        <ecNumber evidence="21">1.14.18.7</ecNumber>
    </alternativeName>
    <alternativeName>
        <fullName evidence="13">Sphingolipid alpha-hydroxylase</fullName>
    </alternativeName>
    <alternativeName>
        <fullName>Suppressor of calcium sensitivity 7</fullName>
    </alternativeName>
</protein>
<gene>
    <name evidence="13 15" type="primary">SCS7</name>
    <name evidence="14" type="synonym">FAH1</name>
    <name type="ordered locus">YMR272C</name>
    <name type="ORF">YM8156.14C</name>
</gene>
<reference key="1">
    <citation type="journal article" date="1997" name="Nature">
        <title>The nucleotide sequence of Saccharomyces cerevisiae chromosome XIII.</title>
        <authorList>
            <person name="Bowman S."/>
            <person name="Churcher C.M."/>
            <person name="Badcock K."/>
            <person name="Brown D."/>
            <person name="Chillingworth T."/>
            <person name="Connor R."/>
            <person name="Dedman K."/>
            <person name="Devlin K."/>
            <person name="Gentles S."/>
            <person name="Hamlin N."/>
            <person name="Hunt S."/>
            <person name="Jagels K."/>
            <person name="Lye G."/>
            <person name="Moule S."/>
            <person name="Odell C."/>
            <person name="Pearson D."/>
            <person name="Rajandream M.A."/>
            <person name="Rice P."/>
            <person name="Skelton J."/>
            <person name="Walsh S.V."/>
            <person name="Whitehead S."/>
            <person name="Barrell B.G."/>
        </authorList>
    </citation>
    <scope>NUCLEOTIDE SEQUENCE [LARGE SCALE GENOMIC DNA]</scope>
    <source>
        <strain>ATCC 204508 / S288c</strain>
    </source>
</reference>
<reference key="2">
    <citation type="journal article" date="2014" name="G3 (Bethesda)">
        <title>The reference genome sequence of Saccharomyces cerevisiae: Then and now.</title>
        <authorList>
            <person name="Engel S.R."/>
            <person name="Dietrich F.S."/>
            <person name="Fisk D.G."/>
            <person name="Binkley G."/>
            <person name="Balakrishnan R."/>
            <person name="Costanzo M.C."/>
            <person name="Dwight S.S."/>
            <person name="Hitz B.C."/>
            <person name="Karra K."/>
            <person name="Nash R.S."/>
            <person name="Weng S."/>
            <person name="Wong E.D."/>
            <person name="Lloyd P."/>
            <person name="Skrzypek M.S."/>
            <person name="Miyasato S.R."/>
            <person name="Simison M."/>
            <person name="Cherry J.M."/>
        </authorList>
    </citation>
    <scope>GENOME REANNOTATION</scope>
    <source>
        <strain>ATCC 204508 / S288c</strain>
    </source>
</reference>
<reference key="3">
    <citation type="journal article" date="2007" name="Genome Res.">
        <title>Approaching a complete repository of sequence-verified protein-encoding clones for Saccharomyces cerevisiae.</title>
        <authorList>
            <person name="Hu Y."/>
            <person name="Rolfs A."/>
            <person name="Bhullar B."/>
            <person name="Murthy T.V.S."/>
            <person name="Zhu C."/>
            <person name="Berger M.F."/>
            <person name="Camargo A.A."/>
            <person name="Kelley F."/>
            <person name="McCarron S."/>
            <person name="Jepson D."/>
            <person name="Richardson A."/>
            <person name="Raphael J."/>
            <person name="Moreira D."/>
            <person name="Taycher E."/>
            <person name="Zuo D."/>
            <person name="Mohr S."/>
            <person name="Kane M.F."/>
            <person name="Williamson J."/>
            <person name="Simpson A.J.G."/>
            <person name="Bulyk M.L."/>
            <person name="Harlow E."/>
            <person name="Marsischky G."/>
            <person name="Kolodner R.D."/>
            <person name="LaBaer J."/>
        </authorList>
    </citation>
    <scope>NUCLEOTIDE SEQUENCE [GENOMIC DNA]</scope>
    <source>
        <strain>ATCC 204508 / S288c</strain>
    </source>
</reference>
<reference key="4">
    <citation type="journal article" date="1997" name="J. Biol. Chem.">
        <title>Fah1p, a Saccharomyces cerevisiae cytochrome b5 fusion protein, and its Arabidopsis thaliana homolog that lacks the cytochrome b5 domain both function in the alpha-hydroxylation of sphingolipid-associated very long chain fatty acids.</title>
        <authorList>
            <person name="Mitchell A.G."/>
            <person name="Martin C.E."/>
        </authorList>
    </citation>
    <scope>FUNCTION</scope>
    <scope>CATALYTIC ACTIVITY</scope>
    <scope>PATHWAY</scope>
</reference>
<reference key="5">
    <citation type="journal article" date="1997" name="J. Biol. Chem.">
        <title>Hydroxylation of Saccharomyces cerevisiae ceramides requires Sur2p and Scs7p.</title>
        <authorList>
            <person name="Haak D."/>
            <person name="Gable K."/>
            <person name="Beeler T."/>
            <person name="Dunn T."/>
        </authorList>
    </citation>
    <scope>FUNCTION</scope>
    <scope>CATALYTIC ACTIVITY</scope>
    <scope>PATHWAY</scope>
</reference>
<reference key="6">
    <citation type="journal article" date="1998" name="Yeast">
        <title>Synthesis of monohydroxylated inositolphosphorylceramide (IPC-C) in Saccharomyces cerevisiae requires Scs7p, a protein with both a cytochrome b5-like domain and a hydroxylase/desaturase domain.</title>
        <authorList>
            <person name="Dunn T.M."/>
            <person name="Haak D."/>
            <person name="Monaghan E."/>
            <person name="Beeler T.J."/>
        </authorList>
    </citation>
    <scope>FUNCTION</scope>
    <scope>PATHWAY</scope>
</reference>
<reference key="7">
    <citation type="journal article" date="2000" name="FEBS Lett.">
        <title>Requirement of sphingolipid alpha-hydroxylation for fungicidal action of syringomycin E.</title>
        <authorList>
            <person name="Hama H."/>
            <person name="Young D.A."/>
            <person name="Radding J.A."/>
            <person name="Ma D."/>
            <person name="Tang J."/>
            <person name="Stock S.D."/>
            <person name="Takemoto J.Y."/>
        </authorList>
    </citation>
    <scope>DISRUPTION PHENOTYPE</scope>
</reference>
<reference key="8">
    <citation type="journal article" date="2002" name="J. Biol. Chem.">
        <title>Sterol-dependent regulation of sphingolipid metabolism in Saccharomyces cerevisiae.</title>
        <authorList>
            <person name="Swain E."/>
            <person name="Baudry K."/>
            <person name="Stukey J."/>
            <person name="McDonough V."/>
            <person name="Germann M."/>
            <person name="Nickels J.T. Jr."/>
        </authorList>
    </citation>
    <scope>PATHWAY</scope>
</reference>
<reference key="9">
    <citation type="journal article" date="2003" name="Nature">
        <title>Global analysis of protein localization in budding yeast.</title>
        <authorList>
            <person name="Huh W.-K."/>
            <person name="Falvo J.V."/>
            <person name="Gerke L.C."/>
            <person name="Carroll A.S."/>
            <person name="Howson R.W."/>
            <person name="Weissman J.S."/>
            <person name="O'Shea E.K."/>
        </authorList>
    </citation>
    <scope>SUBCELLULAR LOCATION [LARGE SCALE ANALYSIS]</scope>
</reference>
<reference key="10">
    <citation type="journal article" date="2003" name="Nature">
        <title>Global analysis of protein expression in yeast.</title>
        <authorList>
            <person name="Ghaemmaghami S."/>
            <person name="Huh W.-K."/>
            <person name="Bower K."/>
            <person name="Howson R.W."/>
            <person name="Belle A."/>
            <person name="Dephoure N."/>
            <person name="O'Shea E.K."/>
            <person name="Weissman J.S."/>
        </authorList>
    </citation>
    <scope>LEVEL OF PROTEIN EXPRESSION [LARGE SCALE ANALYSIS]</scope>
</reference>
<reference key="11">
    <citation type="journal article" date="2006" name="Proc. Natl. Acad. Sci. U.S.A.">
        <title>A global topology map of the Saccharomyces cerevisiae membrane proteome.</title>
        <authorList>
            <person name="Kim H."/>
            <person name="Melen K."/>
            <person name="Oesterberg M."/>
            <person name="von Heijne G."/>
        </authorList>
    </citation>
    <scope>TOPOLOGY [LARGE SCALE ANALYSIS]</scope>
    <source>
        <strain>ATCC 208353 / W303-1A</strain>
    </source>
</reference>
<reference key="12">
    <citation type="journal article" date="2006" name="Yeast">
        <title>Mass spectrometry-based profiling of phospholipids and sphingolipids in extracts from Saccharomyces cerevisiae.</title>
        <authorList>
            <person name="Guan X.L."/>
            <person name="Wenk M.R."/>
        </authorList>
    </citation>
    <scope>FUNCTION</scope>
    <scope>CATALYTIC ACTIVITY</scope>
    <scope>PATHWAY</scope>
</reference>
<reference key="13">
    <citation type="journal article" date="2009" name="Eukaryot. Cell">
        <title>Incorporation of ceramides into Saccharomyces cerevisiae glycosylphosphatidylinositol-anchored proteins can be monitored in vitro.</title>
        <authorList>
            <person name="Bosson R."/>
            <person name="Guillas I."/>
            <person name="Vionnet C."/>
            <person name="Roubaty C."/>
            <person name="Conzelmann A."/>
        </authorList>
    </citation>
    <scope>FUNCTION</scope>
    <scope>PATHWAY</scope>
</reference>
<reference key="14">
    <citation type="journal article" date="2016" name="J. Lipid Res.">
        <title>Following the flux of long-chain bases through the sphingolipid pathway in vivo using mass spectrometry.</title>
        <authorList>
            <person name="Martinez-Montanes F."/>
            <person name="Schneiter R."/>
        </authorList>
    </citation>
    <scope>FUNCTION</scope>
    <scope>CATALYTIC ACTIVITY</scope>
    <scope>PATHWAY</scope>
</reference>
<reference key="15">
    <citation type="journal article" date="2015" name="J. Biol. Chem.">
        <title>The crystal structure of an integral membrane fatty acid alpha-hydroxylase.</title>
        <authorList>
            <person name="Zhu G."/>
            <person name="Koszelak-Rosenblum M."/>
            <person name="Connelly S.M."/>
            <person name="Dumont M.E."/>
            <person name="Malkowski M.G."/>
        </authorList>
    </citation>
    <scope>X-RAY CRYSTALLOGRAPHY (2.60 ANGSTROMS) OF 96-384 IN COMPLEX WITH ZINC</scope>
    <scope>COFACTOR</scope>
    <scope>MUTAGENESIS OF HIS-173; HIS-244; HIS-249; HIS-264; HIS-268; HIS-271; HIS-272; TYR-319; TYR-322; ASP-323; HIS-326; HIS-330; HIS-331; HIS-345; HIS-348 AND HIS-349</scope>
    <scope>TOPOLOGY</scope>
</reference>
<dbReference type="EC" id="1.14.18.6" evidence="19 21"/>
<dbReference type="EC" id="1.14.18.7" evidence="21"/>
<dbReference type="EMBL" id="Z49260">
    <property type="protein sequence ID" value="CAA89255.1"/>
    <property type="molecule type" value="Genomic_DNA"/>
</dbReference>
<dbReference type="EMBL" id="AY693150">
    <property type="protein sequence ID" value="AAT93169.1"/>
    <property type="molecule type" value="Genomic_DNA"/>
</dbReference>
<dbReference type="EMBL" id="BK006946">
    <property type="protein sequence ID" value="DAA10172.1"/>
    <property type="molecule type" value="Genomic_DNA"/>
</dbReference>
<dbReference type="PIR" id="S54484">
    <property type="entry name" value="S54484"/>
</dbReference>
<dbReference type="RefSeq" id="NP_013999.1">
    <property type="nucleotide sequence ID" value="NM_001182779.1"/>
</dbReference>
<dbReference type="PDB" id="4ZR0">
    <property type="method" value="X-ray"/>
    <property type="resolution" value="3.80 A"/>
    <property type="chains" value="A/B=1-384"/>
</dbReference>
<dbReference type="PDB" id="4ZR1">
    <property type="method" value="X-ray"/>
    <property type="resolution" value="2.60 A"/>
    <property type="chains" value="A/B=96-384"/>
</dbReference>
<dbReference type="PDBsum" id="4ZR0"/>
<dbReference type="PDBsum" id="4ZR1"/>
<dbReference type="SMR" id="Q03529"/>
<dbReference type="BioGRID" id="35451">
    <property type="interactions" value="1034"/>
</dbReference>
<dbReference type="FunCoup" id="Q03529">
    <property type="interactions" value="333"/>
</dbReference>
<dbReference type="IntAct" id="Q03529">
    <property type="interactions" value="35"/>
</dbReference>
<dbReference type="MINT" id="Q03529"/>
<dbReference type="STRING" id="4932.YMR272C"/>
<dbReference type="SwissLipids" id="SLP:000001842"/>
<dbReference type="iPTMnet" id="Q03529"/>
<dbReference type="PaxDb" id="4932-YMR272C"/>
<dbReference type="PeptideAtlas" id="Q03529"/>
<dbReference type="DNASU" id="855315"/>
<dbReference type="EnsemblFungi" id="YMR272C_mRNA">
    <property type="protein sequence ID" value="YMR272C"/>
    <property type="gene ID" value="YMR272C"/>
</dbReference>
<dbReference type="GeneID" id="855315"/>
<dbReference type="KEGG" id="sce:YMR272C"/>
<dbReference type="AGR" id="SGD:S000004885"/>
<dbReference type="SGD" id="S000004885">
    <property type="gene designation" value="SCS7"/>
</dbReference>
<dbReference type="VEuPathDB" id="FungiDB:YMR272C"/>
<dbReference type="eggNOG" id="KOG0537">
    <property type="taxonomic scope" value="Eukaryota"/>
</dbReference>
<dbReference type="eggNOG" id="KOG0539">
    <property type="taxonomic scope" value="Eukaryota"/>
</dbReference>
<dbReference type="GeneTree" id="ENSGT00390000002142"/>
<dbReference type="HOGENOM" id="CLU_034756_0_1_1"/>
<dbReference type="InParanoid" id="Q03529"/>
<dbReference type="OMA" id="WTIIEYV"/>
<dbReference type="OrthoDB" id="2204368at2759"/>
<dbReference type="BioCyc" id="MetaCyc:YMR272C-MONOMER"/>
<dbReference type="BioCyc" id="YEAST:YMR272C-MONOMER"/>
<dbReference type="BRENDA" id="1.14.18.6">
    <property type="organism ID" value="984"/>
</dbReference>
<dbReference type="Reactome" id="R-SCE-1660661">
    <property type="pathway name" value="Sphingolipid de novo biosynthesis"/>
</dbReference>
<dbReference type="BioGRID-ORCS" id="855315">
    <property type="hits" value="4 hits in 10 CRISPR screens"/>
</dbReference>
<dbReference type="EvolutionaryTrace" id="Q03529"/>
<dbReference type="PRO" id="PR:Q03529"/>
<dbReference type="Proteomes" id="UP000002311">
    <property type="component" value="Chromosome XIII"/>
</dbReference>
<dbReference type="RNAct" id="Q03529">
    <property type="molecule type" value="protein"/>
</dbReference>
<dbReference type="GO" id="GO:0005783">
    <property type="term" value="C:endoplasmic reticulum"/>
    <property type="evidence" value="ECO:0007005"/>
    <property type="project" value="SGD"/>
</dbReference>
<dbReference type="GO" id="GO:0005789">
    <property type="term" value="C:endoplasmic reticulum membrane"/>
    <property type="evidence" value="ECO:0007669"/>
    <property type="project" value="UniProtKB-SubCell"/>
</dbReference>
<dbReference type="GO" id="GO:0016020">
    <property type="term" value="C:membrane"/>
    <property type="evidence" value="ECO:0000255"/>
    <property type="project" value="SGD"/>
</dbReference>
<dbReference type="GO" id="GO:0120521">
    <property type="term" value="F:4-hydroxysphinganine ceramide fatty acyl 2-hydroxylase activity"/>
    <property type="evidence" value="ECO:0007669"/>
    <property type="project" value="RHEA"/>
</dbReference>
<dbReference type="GO" id="GO:0102771">
    <property type="term" value="F:dihydroceramide fatty acyl 2-hydroxylase activity"/>
    <property type="evidence" value="ECO:0007669"/>
    <property type="project" value="UniProtKB-EC"/>
</dbReference>
<dbReference type="GO" id="GO:0080132">
    <property type="term" value="F:fatty acid 2-hydroxylase activity"/>
    <property type="evidence" value="ECO:0000315"/>
    <property type="project" value="SGD"/>
</dbReference>
<dbReference type="GO" id="GO:0020037">
    <property type="term" value="F:heme binding"/>
    <property type="evidence" value="ECO:0007669"/>
    <property type="project" value="InterPro"/>
</dbReference>
<dbReference type="GO" id="GO:0005506">
    <property type="term" value="F:iron ion binding"/>
    <property type="evidence" value="ECO:0007669"/>
    <property type="project" value="InterPro"/>
</dbReference>
<dbReference type="GO" id="GO:0008270">
    <property type="term" value="F:zinc ion binding"/>
    <property type="evidence" value="ECO:0000314"/>
    <property type="project" value="UniProtKB"/>
</dbReference>
<dbReference type="GO" id="GO:0046513">
    <property type="term" value="P:ceramide biosynthetic process"/>
    <property type="evidence" value="ECO:0000315"/>
    <property type="project" value="UniProtKB"/>
</dbReference>
<dbReference type="GO" id="GO:0006633">
    <property type="term" value="P:fatty acid biosynthetic process"/>
    <property type="evidence" value="ECO:0007669"/>
    <property type="project" value="UniProtKB-KW"/>
</dbReference>
<dbReference type="GO" id="GO:0006631">
    <property type="term" value="P:fatty acid metabolic process"/>
    <property type="evidence" value="ECO:0000318"/>
    <property type="project" value="GO_Central"/>
</dbReference>
<dbReference type="GO" id="GO:0006673">
    <property type="term" value="P:inositol phosphoceramide metabolic process"/>
    <property type="evidence" value="ECO:0000315"/>
    <property type="project" value="SGD"/>
</dbReference>
<dbReference type="GO" id="GO:0000038">
    <property type="term" value="P:very long-chain fatty acid metabolic process"/>
    <property type="evidence" value="ECO:0000315"/>
    <property type="project" value="SGD"/>
</dbReference>
<dbReference type="FunFam" id="3.10.120.10:FF:000002">
    <property type="entry name" value="Cytochrome b5 type B"/>
    <property type="match status" value="1"/>
</dbReference>
<dbReference type="Gene3D" id="3.10.120.10">
    <property type="entry name" value="Cytochrome b5-like heme/steroid binding domain"/>
    <property type="match status" value="1"/>
</dbReference>
<dbReference type="InterPro" id="IPR001199">
    <property type="entry name" value="Cyt_B5-like_heme/steroid-bd"/>
</dbReference>
<dbReference type="InterPro" id="IPR036400">
    <property type="entry name" value="Cyt_B5-like_heme/steroid_sf"/>
</dbReference>
<dbReference type="InterPro" id="IPR018506">
    <property type="entry name" value="Cyt_B5_heme-BS"/>
</dbReference>
<dbReference type="InterPro" id="IPR006694">
    <property type="entry name" value="Fatty_acid_hydroxylase"/>
</dbReference>
<dbReference type="InterPro" id="IPR014430">
    <property type="entry name" value="Scs7"/>
</dbReference>
<dbReference type="PANTHER" id="PTHR12863:SF1">
    <property type="entry name" value="FATTY ACID 2-HYDROXYLASE"/>
    <property type="match status" value="1"/>
</dbReference>
<dbReference type="PANTHER" id="PTHR12863">
    <property type="entry name" value="FATTY ACID HYDROXYLASE"/>
    <property type="match status" value="1"/>
</dbReference>
<dbReference type="Pfam" id="PF00173">
    <property type="entry name" value="Cyt-b5"/>
    <property type="match status" value="1"/>
</dbReference>
<dbReference type="Pfam" id="PF04116">
    <property type="entry name" value="FA_hydroxylase"/>
    <property type="match status" value="1"/>
</dbReference>
<dbReference type="PIRSF" id="PIRSF005149">
    <property type="entry name" value="IPC-B_HD"/>
    <property type="match status" value="1"/>
</dbReference>
<dbReference type="PRINTS" id="PR00363">
    <property type="entry name" value="CYTOCHROMEB5"/>
</dbReference>
<dbReference type="SMART" id="SM01117">
    <property type="entry name" value="Cyt-b5"/>
    <property type="match status" value="1"/>
</dbReference>
<dbReference type="SUPFAM" id="SSF55856">
    <property type="entry name" value="Cytochrome b5-like heme/steroid binding domain"/>
    <property type="match status" value="1"/>
</dbReference>
<dbReference type="PROSITE" id="PS00191">
    <property type="entry name" value="CYTOCHROME_B5_1"/>
    <property type="match status" value="1"/>
</dbReference>
<dbReference type="PROSITE" id="PS50255">
    <property type="entry name" value="CYTOCHROME_B5_2"/>
    <property type="match status" value="1"/>
</dbReference>
<keyword id="KW-0002">3D-structure</keyword>
<keyword id="KW-0249">Electron transport</keyword>
<keyword id="KW-0256">Endoplasmic reticulum</keyword>
<keyword id="KW-0275">Fatty acid biosynthesis</keyword>
<keyword id="KW-0276">Fatty acid metabolism</keyword>
<keyword id="KW-0349">Heme</keyword>
<keyword id="KW-0408">Iron</keyword>
<keyword id="KW-0444">Lipid biosynthesis</keyword>
<keyword id="KW-0443">Lipid metabolism</keyword>
<keyword id="KW-0472">Membrane</keyword>
<keyword id="KW-0479">Metal-binding</keyword>
<keyword id="KW-0560">Oxidoreductase</keyword>
<keyword id="KW-1185">Reference proteome</keyword>
<keyword id="KW-0812">Transmembrane</keyword>
<keyword id="KW-1133">Transmembrane helix</keyword>
<keyword id="KW-0813">Transport</keyword>
<keyword id="KW-0862">Zinc</keyword>
<evidence type="ECO:0000255" key="1">
    <source>
        <dbReference type="PROSITE-ProRule" id="PRU00279"/>
    </source>
</evidence>
<evidence type="ECO:0000269" key="2">
    <source>
    </source>
</evidence>
<evidence type="ECO:0000269" key="3">
    <source>
    </source>
</evidence>
<evidence type="ECO:0000269" key="4">
    <source>
    </source>
</evidence>
<evidence type="ECO:0000269" key="5">
    <source>
    </source>
</evidence>
<evidence type="ECO:0000269" key="6">
    <source>
    </source>
</evidence>
<evidence type="ECO:0000269" key="7">
    <source>
    </source>
</evidence>
<evidence type="ECO:0000269" key="8">
    <source>
    </source>
</evidence>
<evidence type="ECO:0000269" key="9">
    <source>
    </source>
</evidence>
<evidence type="ECO:0000269" key="10">
    <source>
    </source>
</evidence>
<evidence type="ECO:0000269" key="11">
    <source>
    </source>
</evidence>
<evidence type="ECO:0000269" key="12">
    <source>
    </source>
</evidence>
<evidence type="ECO:0000303" key="13">
    <source>
    </source>
</evidence>
<evidence type="ECO:0000303" key="14">
    <source>
    </source>
</evidence>
<evidence type="ECO:0000303" key="15">
    <source>
    </source>
</evidence>
<evidence type="ECO:0000305" key="16"/>
<evidence type="ECO:0000305" key="17">
    <source>
    </source>
</evidence>
<evidence type="ECO:0000305" key="18">
    <source>
    </source>
</evidence>
<evidence type="ECO:0000305" key="19">
    <source>
    </source>
</evidence>
<evidence type="ECO:0000305" key="20">
    <source>
    </source>
</evidence>
<evidence type="ECO:0000305" key="21">
    <source>
    </source>
</evidence>
<evidence type="ECO:0007829" key="22">
    <source>
        <dbReference type="PDB" id="4ZR1"/>
    </source>
</evidence>
<organism>
    <name type="scientific">Saccharomyces cerevisiae (strain ATCC 204508 / S288c)</name>
    <name type="common">Baker's yeast</name>
    <dbReference type="NCBI Taxonomy" id="559292"/>
    <lineage>
        <taxon>Eukaryota</taxon>
        <taxon>Fungi</taxon>
        <taxon>Dikarya</taxon>
        <taxon>Ascomycota</taxon>
        <taxon>Saccharomycotina</taxon>
        <taxon>Saccharomycetes</taxon>
        <taxon>Saccharomycetales</taxon>
        <taxon>Saccharomycetaceae</taxon>
        <taxon>Saccharomyces</taxon>
    </lineage>
</organism>
<comment type="function">
    <text evidence="6 7 9 10 11 12">Ceramide hydroxylase involved in the hydroxylation of sphingolipid-associated very long chain fatty acids (PubMed:16652392, PubMed:19074599, PubMed:26977056, PubMed:9353282, PubMed:9368039, PubMed:9559540). Postulated to hydroxylate the very long chain fatty acid of dihydroceramides and phytoceramides at C-2 (PubMed:26977056, PubMed:9368039).</text>
</comment>
<comment type="catalytic activity">
    <reaction evidence="19 21">
        <text>an N-(1,2 saturated acyl)-(4R)-hydroxysphinganine + 2 Fe(II)-[cytochrome b5] + O2 + 2 H(+) = an N-(2R-hydroxyacyl)-4R-hydroxysphinganine + 2 Fe(III)-[cytochrome b5] + H2O</text>
        <dbReference type="Rhea" id="RHEA:46520"/>
        <dbReference type="Rhea" id="RHEA-COMP:10438"/>
        <dbReference type="Rhea" id="RHEA-COMP:10439"/>
        <dbReference type="ChEBI" id="CHEBI:15377"/>
        <dbReference type="ChEBI" id="CHEBI:15378"/>
        <dbReference type="ChEBI" id="CHEBI:15379"/>
        <dbReference type="ChEBI" id="CHEBI:29033"/>
        <dbReference type="ChEBI" id="CHEBI:29034"/>
        <dbReference type="ChEBI" id="CHEBI:86274"/>
        <dbReference type="ChEBI" id="CHEBI:86275"/>
        <dbReference type="EC" id="1.14.18.6"/>
    </reaction>
</comment>
<comment type="catalytic activity">
    <reaction evidence="21">
        <text>an N-(1,2-saturated acyl)sphinganine + 2 Fe(II)-[cytochrome b5] + O2 + 2 H(+) = an N-[(2'R)-hydroxyacyl]sphinganine + 2 Fe(III)-[cytochrome b5] + H2O</text>
        <dbReference type="Rhea" id="RHEA:46512"/>
        <dbReference type="Rhea" id="RHEA-COMP:10438"/>
        <dbReference type="Rhea" id="RHEA-COMP:10439"/>
        <dbReference type="ChEBI" id="CHEBI:15377"/>
        <dbReference type="ChEBI" id="CHEBI:15378"/>
        <dbReference type="ChEBI" id="CHEBI:15379"/>
        <dbReference type="ChEBI" id="CHEBI:29033"/>
        <dbReference type="ChEBI" id="CHEBI:29034"/>
        <dbReference type="ChEBI" id="CHEBI:86265"/>
        <dbReference type="ChEBI" id="CHEBI:86266"/>
        <dbReference type="EC" id="1.14.18.7"/>
    </reaction>
</comment>
<comment type="catalytic activity">
    <reaction evidence="6 10 11">
        <text>N-hexacosanoyl-(4R)-hydroxysphinganine + 2 Fe(II)-[cytochrome b5] + O2 + 2 H(+) = N-(2-hydroxyhexacosanyl)-(4R)-hydroxysphinganine + 2 Fe(III)-[cytochrome b5] + H2O</text>
        <dbReference type="Rhea" id="RHEA:33663"/>
        <dbReference type="Rhea" id="RHEA-COMP:10438"/>
        <dbReference type="Rhea" id="RHEA-COMP:10439"/>
        <dbReference type="ChEBI" id="CHEBI:15377"/>
        <dbReference type="ChEBI" id="CHEBI:15378"/>
        <dbReference type="ChEBI" id="CHEBI:15379"/>
        <dbReference type="ChEBI" id="CHEBI:29033"/>
        <dbReference type="ChEBI" id="CHEBI:29034"/>
        <dbReference type="ChEBI" id="CHEBI:52374"/>
        <dbReference type="ChEBI" id="CHEBI:52980"/>
    </reaction>
    <physiologicalReaction direction="left-to-right" evidence="17 20 21">
        <dbReference type="Rhea" id="RHEA:33664"/>
    </physiologicalReaction>
</comment>
<comment type="cofactor">
    <cofactor evidence="18">
        <name>Zn(2+)</name>
        <dbReference type="ChEBI" id="CHEBI:29105"/>
    </cofactor>
    <text evidence="8">Binds 2 Zn(2+) ions per subunit that likely form a catalytic dimetal center.</text>
</comment>
<comment type="pathway">
    <text evidence="3 6 7 9 10 11 12">Sphingolipid metabolism.</text>
</comment>
<comment type="subcellular location">
    <subcellularLocation>
        <location evidence="4">Endoplasmic reticulum membrane</location>
        <topology evidence="4">Multi-pass membrane protein</topology>
    </subcellularLocation>
</comment>
<comment type="domain">
    <text>The histidine box domains may contain the active site and/or be involved in metal ion binding.</text>
</comment>
<comment type="disruption phenotype">
    <text evidence="2">Causes a lack of alpha-hydroxylated very long chain fatty acids in yeast sphingolipids. This confers resistance to syringomycin E, an antifungal cyclic lipodepsinonapeptide produced by Pseudomonas syringae.</text>
</comment>
<comment type="miscellaneous">
    <text evidence="5">Present with 3290 molecules/cell in log phase SD medium.</text>
</comment>
<comment type="similarity">
    <text evidence="16">Belongs to the sterol desaturase family. SCS7 subfamily.</text>
</comment>
<sequence length="384" mass="44881">MSTNTSKTLELFSKKTVQEHNTANDCWVTYQNRKIYDVTRFLSEHPGGDESILDYAGKDITEIMKDSDVHEHSDSAYEILEDEYLIGYLATDEEAARLLTNKNHKVEVQLSADGTEFDSTTFVKELPAEEKLSIATDYSNDYKKHKFLDLNRPLLMQILRSDFKKDFYVDQIHRPRHYGKGSAPLFGNFLEPLTKTAWWVVPVAWLPVVVYHMGVALKNMNQLFACFLFCVGVFVWTLIEYGLHRFLFHFDDWLPESNIAFATHFLLHGCHHYLPMDKYRLVMPPTLFVILCAPFYKLVFALLPLYWAYAGFAGGLFGYVCYDECHFFLHHSKLPPFMRKLKKYHLEHHYKNYQLGFGVTSWFWDEVFGTYLGPDAPLSKMKYE</sequence>
<accession>Q03529</accession>
<accession>D6W098</accession>
<name>SCS7_YEAST</name>
<proteinExistence type="evidence at protein level"/>
<feature type="chain" id="PRO_0000185407" description="Ceramide very long chain fatty acid hydroxylase SCS7">
    <location>
        <begin position="1"/>
        <end position="384"/>
    </location>
</feature>
<feature type="topological domain" description="Cytoplasmic" evidence="16">
    <location>
        <begin position="1"/>
        <end position="197"/>
    </location>
</feature>
<feature type="transmembrane region" description="Helical; Name=TM1" evidence="8">
    <location>
        <begin position="198"/>
        <end position="216"/>
    </location>
</feature>
<feature type="topological domain" description="Lumenal" evidence="16">
    <location>
        <begin position="217"/>
        <end position="221"/>
    </location>
</feature>
<feature type="transmembrane region" description="Helical; Name=TM2" evidence="8">
    <location>
        <begin position="222"/>
        <end position="246"/>
    </location>
</feature>
<feature type="topological domain" description="Cytoplasmic" evidence="16">
    <location>
        <begin position="247"/>
        <end position="284"/>
    </location>
</feature>
<feature type="transmembrane region" description="Helical; Name=TM3" evidence="8">
    <location>
        <begin position="285"/>
        <end position="302"/>
    </location>
</feature>
<feature type="topological domain" description="Lumenal" evidence="16">
    <location>
        <begin position="303"/>
        <end position="304"/>
    </location>
</feature>
<feature type="transmembrane region" description="Helical; Name=TM4" evidence="8">
    <location>
        <begin position="305"/>
        <end position="328"/>
    </location>
</feature>
<feature type="topological domain" description="Cytoplasmic" evidence="16">
    <location>
        <begin position="329"/>
        <end position="384"/>
    </location>
</feature>
<feature type="domain" description="Cytochrome b5 heme-binding" evidence="1">
    <location>
        <begin position="9"/>
        <end position="90"/>
    </location>
</feature>
<feature type="binding site" description="axial binding residue" evidence="1">
    <location>
        <position position="45"/>
    </location>
    <ligand>
        <name>heme</name>
        <dbReference type="ChEBI" id="CHEBI:30413"/>
    </ligand>
    <ligandPart>
        <name>Fe</name>
        <dbReference type="ChEBI" id="CHEBI:18248"/>
    </ligandPart>
</feature>
<feature type="binding site" description="axial binding residue" evidence="1">
    <location>
        <position position="72"/>
    </location>
    <ligand>
        <name>heme</name>
        <dbReference type="ChEBI" id="CHEBI:30413"/>
    </ligand>
    <ligandPart>
        <name>Fe</name>
        <dbReference type="ChEBI" id="CHEBI:18248"/>
    </ligandPart>
</feature>
<feature type="binding site" evidence="8">
    <location>
        <position position="244"/>
    </location>
    <ligand>
        <name>Zn(2+)</name>
        <dbReference type="ChEBI" id="CHEBI:29105"/>
        <label>1</label>
    </ligand>
</feature>
<feature type="binding site" evidence="8">
    <location>
        <position position="249"/>
    </location>
    <ligand>
        <name>Zn(2+)</name>
        <dbReference type="ChEBI" id="CHEBI:29105"/>
        <label>1</label>
    </ligand>
</feature>
<feature type="binding site" evidence="8">
    <location>
        <position position="268"/>
    </location>
    <ligand>
        <name>Zn(2+)</name>
        <dbReference type="ChEBI" id="CHEBI:29105"/>
        <label>1</label>
    </ligand>
</feature>
<feature type="binding site" evidence="8">
    <location>
        <position position="271"/>
    </location>
    <ligand>
        <name>Zn(2+)</name>
        <dbReference type="ChEBI" id="CHEBI:29105"/>
        <label>2</label>
    </ligand>
</feature>
<feature type="binding site" evidence="8">
    <location>
        <position position="272"/>
    </location>
    <ligand>
        <name>Zn(2+)</name>
        <dbReference type="ChEBI" id="CHEBI:29105"/>
        <label>1</label>
    </ligand>
</feature>
<feature type="binding site" evidence="8">
    <location>
        <position position="326"/>
    </location>
    <ligand>
        <name>Zn(2+)</name>
        <dbReference type="ChEBI" id="CHEBI:29105"/>
        <label>2</label>
    </ligand>
</feature>
<feature type="binding site" evidence="8">
    <location>
        <position position="330"/>
    </location>
    <ligand>
        <name>Zn(2+)</name>
        <dbReference type="ChEBI" id="CHEBI:29105"/>
        <label>2</label>
    </ligand>
</feature>
<feature type="binding site" evidence="8">
    <location>
        <position position="345"/>
    </location>
    <ligand>
        <name>Zn(2+)</name>
        <dbReference type="ChEBI" id="CHEBI:29105"/>
        <label>2</label>
    </ligand>
</feature>
<feature type="binding site" evidence="8">
    <location>
        <position position="348"/>
    </location>
    <ligand>
        <name>Zn(2+)</name>
        <dbReference type="ChEBI" id="CHEBI:29105"/>
        <label>1</label>
    </ligand>
</feature>
<feature type="binding site" evidence="8">
    <location>
        <position position="349"/>
    </location>
    <ligand>
        <name>Zn(2+)</name>
        <dbReference type="ChEBI" id="CHEBI:29105"/>
        <label>2</label>
    </ligand>
</feature>
<feature type="mutagenesis site" description="Reduces the susceptibility to Syringomycin E, showing reduced catalytic activity." evidence="8">
    <original>H</original>
    <variation>A</variation>
    <location>
        <position position="173"/>
    </location>
</feature>
<feature type="mutagenesis site" description="Confers resistance to Syringomycin E, showing impaired catalytic activity." evidence="8">
    <original>H</original>
    <variation>A</variation>
    <location>
        <position position="244"/>
    </location>
</feature>
<feature type="mutagenesis site" description="Reduces the susceptibility to Syringomycin E, showing reduced catalytic activity." evidence="8">
    <original>H</original>
    <variation>A</variation>
    <location>
        <position position="249"/>
    </location>
</feature>
<feature type="mutagenesis site" description="Maintains the susceptibility to Syringomycin E, showing no effect on catalytic activity." evidence="8">
    <original>H</original>
    <variation>A</variation>
    <location>
        <position position="264"/>
    </location>
</feature>
<feature type="mutagenesis site" description="Reduces the susceptibility to Syringomycin E, showing reduced catalytic activity." evidence="8">
    <original>H</original>
    <variation>A</variation>
    <location>
        <position position="268"/>
    </location>
</feature>
<feature type="mutagenesis site" description="Confers resistance to Syringomycin E, showing impaired catalytic activity." evidence="8">
    <original>H</original>
    <variation>A</variation>
    <location>
        <position position="271"/>
    </location>
</feature>
<feature type="mutagenesis site" description="Confers resistance to Syringomycin E, showing impaired catalytic activity." evidence="8">
    <original>H</original>
    <variation>A</variation>
    <location>
        <position position="272"/>
    </location>
</feature>
<feature type="mutagenesis site" description="Maintains the susceptibility to Syringomycin E, showing no effect on catalytic activity." evidence="8">
    <original>Y</original>
    <variation>A</variation>
    <location>
        <position position="319"/>
    </location>
</feature>
<feature type="mutagenesis site" description="Confers resistance to Syringomycin E, showing impaired catalytic activity." evidence="8">
    <original>Y</original>
    <variation>A</variation>
    <location>
        <position position="322"/>
    </location>
</feature>
<feature type="mutagenesis site" description="Reduces the susceptibility to Syringomycin E, showing reduced catalytic activity." evidence="8">
    <original>D</original>
    <variation>A</variation>
    <location>
        <position position="323"/>
    </location>
</feature>
<feature type="mutagenesis site" description="Confers resistance to Syringomycin E, showing impaired catalytic activity." evidence="8">
    <original>H</original>
    <variation>A</variation>
    <location>
        <position position="326"/>
    </location>
</feature>
<feature type="mutagenesis site" description="Confers resistance to Syringomycin E, showing impaired catalytic activity." evidence="8">
    <original>H</original>
    <variation>A</variation>
    <location>
        <position position="330"/>
    </location>
</feature>
<feature type="mutagenesis site" description="Maintains the susceptibility to Syringomycin E, showing no effect on catalytic activity." evidence="8">
    <original>H</original>
    <variation>A</variation>
    <location>
        <position position="331"/>
    </location>
</feature>
<feature type="mutagenesis site" description="Confers resistance to Syringomycin E, showing impaired catalytic activity." evidence="8">
    <original>H</original>
    <variation>A</variation>
    <location>
        <position position="345"/>
    </location>
</feature>
<feature type="mutagenesis site" description="Confers resistance to Syringomycin E, showing impaired catalytic activity." evidence="8">
    <original>H</original>
    <variation>A</variation>
    <location>
        <position position="348"/>
    </location>
</feature>
<feature type="mutagenesis site" description="Confers resistance to Syringomycin E, showing impaired catalytic activity." evidence="8">
    <original>H</original>
    <variation>A</variation>
    <location>
        <position position="349"/>
    </location>
</feature>
<feature type="helix" evidence="22">
    <location>
        <begin position="129"/>
        <end position="132"/>
    </location>
</feature>
<feature type="helix" evidence="22">
    <location>
        <begin position="138"/>
        <end position="145"/>
    </location>
</feature>
<feature type="helix" evidence="22">
    <location>
        <begin position="154"/>
        <end position="159"/>
    </location>
</feature>
<feature type="helix" evidence="22">
    <location>
        <begin position="165"/>
        <end position="172"/>
    </location>
</feature>
<feature type="helix" evidence="22">
    <location>
        <begin position="191"/>
        <end position="194"/>
    </location>
</feature>
<feature type="helix" evidence="22">
    <location>
        <begin position="200"/>
        <end position="219"/>
    </location>
</feature>
<feature type="helix" evidence="22">
    <location>
        <begin position="222"/>
        <end position="246"/>
    </location>
</feature>
<feature type="turn" evidence="22">
    <location>
        <begin position="247"/>
        <end position="249"/>
    </location>
</feature>
<feature type="helix" evidence="22">
    <location>
        <begin position="251"/>
        <end position="253"/>
    </location>
</feature>
<feature type="helix" evidence="22">
    <location>
        <begin position="258"/>
        <end position="267"/>
    </location>
</feature>
<feature type="helix" evidence="22">
    <location>
        <begin position="269"/>
        <end position="273"/>
    </location>
</feature>
<feature type="strand" evidence="22">
    <location>
        <begin position="280"/>
        <end position="282"/>
    </location>
</feature>
<feature type="helix" evidence="22">
    <location>
        <begin position="285"/>
        <end position="302"/>
    </location>
</feature>
<feature type="helix" evidence="22">
    <location>
        <begin position="305"/>
        <end position="330"/>
    </location>
</feature>
<feature type="helix" evidence="22">
    <location>
        <begin position="336"/>
        <end position="350"/>
    </location>
</feature>
<feature type="strand" evidence="22">
    <location>
        <begin position="353"/>
        <end position="355"/>
    </location>
</feature>
<feature type="helix" evidence="22">
    <location>
        <begin position="363"/>
        <end position="367"/>
    </location>
</feature>